<proteinExistence type="evidence at transcript level"/>
<reference key="1">
    <citation type="journal article" date="2007" name="Proc. Natl. Acad. Sci. U.S.A.">
        <title>Mendel's green cotyledon gene encodes a positive regulator of the chlorophyll-degrading pathway.</title>
        <authorList>
            <person name="Sato Y."/>
            <person name="Morita R."/>
            <person name="Nishimura M."/>
            <person name="Yamaguchi H."/>
            <person name="Kusaba M."/>
        </authorList>
    </citation>
    <scope>NUCLEOTIDE SEQUENCE [MRNA]</scope>
    <scope>FUNCTION</scope>
    <scope>INDUCTION BY DARK-INDUCED SENESCENCE</scope>
    <scope>SUBCELLULAR LOCATION</scope>
    <source>
        <strain>cv. JI 4</strain>
    </source>
</reference>
<reference key="2">
    <citation type="journal article" date="2008" name="Plant Mol. Biol.">
        <title>Stay-green protein, defective in Mendel's green cotyledon mutant, acts independent and upstream of pheophorbide a oxygenase in the chlorophyll catabolic pathway.</title>
        <authorList>
            <person name="Aubry S."/>
            <person name="Mani J."/>
            <person name="Hortensteiner S."/>
        </authorList>
    </citation>
    <scope>NUCLEOTIDE SEQUENCE [GENOMIC DNA]</scope>
    <scope>FUNCTION</scope>
    <scope>DEVELOPMENTAL STAGE</scope>
    <source>
        <strain>cv. JI4</strain>
    </source>
</reference>
<reference key="3">
    <citation type="journal article" date="2007" name="Science">
        <title>Cross-species identification of Mendel's I locus.</title>
        <authorList>
            <person name="Armstead I."/>
            <person name="Donnison I."/>
            <person name="Aubry S."/>
            <person name="Harper J."/>
            <person name="Hortensteiner S."/>
            <person name="James C."/>
            <person name="Mani J."/>
            <person name="Moffet M."/>
            <person name="Ougham H."/>
            <person name="Roberts L."/>
            <person name="Thomas A."/>
            <person name="Weeden N."/>
            <person name="Thomas H."/>
            <person name="King I."/>
        </authorList>
    </citation>
    <scope>IDENTIFICATION</scope>
</reference>
<feature type="transit peptide" description="Chloroplast" evidence="1">
    <location>
        <begin position="1"/>
        <end position="54"/>
    </location>
</feature>
<feature type="chain" id="PRO_0000425234" description="Protein STAY-GREEN, chloroplastic">
    <location>
        <begin position="55"/>
        <end position="261"/>
    </location>
</feature>
<organism>
    <name type="scientific">Pisum sativum</name>
    <name type="common">Garden pea</name>
    <name type="synonym">Lathyrus oleraceus</name>
    <dbReference type="NCBI Taxonomy" id="3888"/>
    <lineage>
        <taxon>Eukaryota</taxon>
        <taxon>Viridiplantae</taxon>
        <taxon>Streptophyta</taxon>
        <taxon>Embryophyta</taxon>
        <taxon>Tracheophyta</taxon>
        <taxon>Spermatophyta</taxon>
        <taxon>Magnoliopsida</taxon>
        <taxon>eudicotyledons</taxon>
        <taxon>Gunneridae</taxon>
        <taxon>Pentapetalae</taxon>
        <taxon>rosids</taxon>
        <taxon>fabids</taxon>
        <taxon>Fabales</taxon>
        <taxon>Fabaceae</taxon>
        <taxon>Papilionoideae</taxon>
        <taxon>50 kb inversion clade</taxon>
        <taxon>NPAAA clade</taxon>
        <taxon>Hologalegina</taxon>
        <taxon>IRL clade</taxon>
        <taxon>Fabeae</taxon>
        <taxon>Pisum</taxon>
    </lineage>
</organism>
<name>SGRW_PEA</name>
<keyword id="KW-0150">Chloroplast</keyword>
<keyword id="KW-0934">Plastid</keyword>
<keyword id="KW-0809">Transit peptide</keyword>
<evidence type="ECO:0000255" key="1"/>
<evidence type="ECO:0000269" key="2">
    <source>
    </source>
</evidence>
<evidence type="ECO:0000269" key="3">
    <source>
    </source>
</evidence>
<evidence type="ECO:0000305" key="4"/>
<evidence type="ECO:0000305" key="5">
    <source>
    </source>
</evidence>
<sequence length="261" mass="29651">MDTLTSAPLLTTKFKPSFSPQQKPCFPHRRRFENGKKNQSIVPVARLFGPAIFEASKLKVLFLGIDENKHPGNLPRTYTLTHSDVTSKLTLAISQTINNSQLQGWYNRLQRDEVVAQWKKVKGKMSLHVHCHISGGHFLLDIFARLRYFIFCKELPVVLKAFVHGDGNLFNNYPELEESLVWVFFHSKIREFNKVECWGPLKEASQPTSGTHSDLKLPQSCEEDCECCFPPLNLSPIPCSNEVINNTYEPIDGIGTQHGNL</sequence>
<dbReference type="EMBL" id="AB303331">
    <property type="protein sequence ID" value="BAF76351.1"/>
    <property type="molecule type" value="mRNA"/>
</dbReference>
<dbReference type="EMBL" id="AM884277">
    <property type="protein sequence ID" value="CAP04954.1"/>
    <property type="molecule type" value="Genomic_DNA"/>
</dbReference>
<dbReference type="SMR" id="A7VLV1"/>
<dbReference type="EnsemblPlants" id="Psat2g181040.1">
    <property type="protein sequence ID" value="Psat2g181040.1.cds"/>
    <property type="gene ID" value="Psat2g181040"/>
</dbReference>
<dbReference type="Gramene" id="Psat2g181040.1">
    <property type="protein sequence ID" value="Psat2g181040.1.cds"/>
    <property type="gene ID" value="Psat2g181040"/>
</dbReference>
<dbReference type="GO" id="GO:0009507">
    <property type="term" value="C:chloroplast"/>
    <property type="evidence" value="ECO:0000314"/>
    <property type="project" value="UniProtKB"/>
</dbReference>
<dbReference type="GO" id="GO:0015996">
    <property type="term" value="P:chlorophyll catabolic process"/>
    <property type="evidence" value="ECO:0007669"/>
    <property type="project" value="TreeGrafter"/>
</dbReference>
<dbReference type="GO" id="GO:0010271">
    <property type="term" value="P:regulation of chlorophyll catabolic process"/>
    <property type="evidence" value="ECO:0000315"/>
    <property type="project" value="UniProtKB"/>
</dbReference>
<dbReference type="InterPro" id="IPR024438">
    <property type="entry name" value="Staygreen"/>
</dbReference>
<dbReference type="PANTHER" id="PTHR31750:SF4">
    <property type="entry name" value="LP06106P"/>
    <property type="match status" value="1"/>
</dbReference>
<dbReference type="PANTHER" id="PTHR31750">
    <property type="entry name" value="PROTEIN STAY-GREEN 1, CHLOROPLASTIC-RELATED"/>
    <property type="match status" value="1"/>
</dbReference>
<dbReference type="Pfam" id="PF12638">
    <property type="entry name" value="Staygreen"/>
    <property type="match status" value="1"/>
</dbReference>
<accession>A7VLV1</accession>
<comment type="function">
    <text evidence="2 3">Probably involved in the disassembling mechanism of the intact light-harvesting complex of photosystem II (LHCII) in the thylakoid membranes. Required for the chlorophyll breakdown pathway. Acts independent and upstream of pheophorbide a oxygenase (PAO).</text>
</comment>
<comment type="subcellular location">
    <subcellularLocation>
        <location evidence="2">Plastid</location>
        <location evidence="2">Chloroplast</location>
    </subcellularLocation>
</comment>
<comment type="developmental stage">
    <text evidence="3">Strongly induced during senescence.</text>
</comment>
<comment type="induction">
    <text evidence="2">Up-regulated during dark-induced senescence.</text>
</comment>
<comment type="miscellaneous">
    <text evidence="5">Corresponds to one of the seven genes studied by Gregor Mendel in 1866 (PubMed:17204643). The green cotyledon (i) line JI2775 used in the original work has a non-functional SGR protein (AC A7VLV2) due to the presence of a two amino acids insertion (PubMed:17709752, PubMed:18301989).</text>
</comment>
<comment type="similarity">
    <text evidence="4">Belongs to the staygreen family.</text>
</comment>
<comment type="online information" name="Protein Spotlight">
    <link uri="https://www.proteinspotlight.org/back_issues/159/"/>
    <text>On the garden pea - Issue 159 of April 2014</text>
</comment>
<gene>
    <name type="primary">SGR</name>
</gene>
<protein>
    <recommendedName>
        <fullName>Protein STAY-GREEN, chloroplastic</fullName>
    </recommendedName>
    <alternativeName>
        <fullName>Protein STAYGREEN</fullName>
    </alternativeName>
</protein>